<feature type="chain" id="PRO_0000087000" description="EPS I polysaccharide export inner membrane protein EpsF">
    <location>
        <begin position="1"/>
        <end position="418"/>
    </location>
</feature>
<feature type="transmembrane region" description="Helical" evidence="1">
    <location>
        <begin position="21"/>
        <end position="41"/>
    </location>
</feature>
<feature type="transmembrane region" description="Helical" evidence="1">
    <location>
        <begin position="45"/>
        <end position="65"/>
    </location>
</feature>
<feature type="transmembrane region" description="Helical" evidence="1">
    <location>
        <begin position="142"/>
        <end position="162"/>
    </location>
</feature>
<feature type="transmembrane region" description="Helical" evidence="1">
    <location>
        <begin position="170"/>
        <end position="190"/>
    </location>
</feature>
<feature type="transmembrane region" description="Helical" evidence="1">
    <location>
        <begin position="222"/>
        <end position="242"/>
    </location>
</feature>
<feature type="transmembrane region" description="Helical" evidence="1">
    <location>
        <begin position="262"/>
        <end position="282"/>
    </location>
</feature>
<feature type="transmembrane region" description="Helical" evidence="1">
    <location>
        <begin position="296"/>
        <end position="316"/>
    </location>
</feature>
<feature type="transmembrane region" description="Helical" evidence="1">
    <location>
        <begin position="326"/>
        <end position="346"/>
    </location>
</feature>
<feature type="transmembrane region" description="Helical" evidence="1">
    <location>
        <begin position="347"/>
        <end position="367"/>
    </location>
</feature>
<feature type="transmembrane region" description="Helical" evidence="1">
    <location>
        <begin position="377"/>
        <end position="397"/>
    </location>
</feature>
<gene>
    <name type="primary">epsF</name>
</gene>
<protein>
    <recommendedName>
        <fullName>EPS I polysaccharide export inner membrane protein EpsF</fullName>
    </recommendedName>
</protein>
<organism>
    <name type="scientific">Ralstonia solanacearum</name>
    <name type="common">Pseudomonas solanacearum</name>
    <dbReference type="NCBI Taxonomy" id="305"/>
    <lineage>
        <taxon>Bacteria</taxon>
        <taxon>Pseudomonadati</taxon>
        <taxon>Pseudomonadota</taxon>
        <taxon>Betaproteobacteria</taxon>
        <taxon>Burkholderiales</taxon>
        <taxon>Burkholderiaceae</taxon>
        <taxon>Ralstonia</taxon>
        <taxon>Ralstonia solanacearum species complex</taxon>
    </lineage>
</organism>
<proteinExistence type="predicted"/>
<evidence type="ECO:0000255" key="1"/>
<evidence type="ECO:0000305" key="2"/>
<reference key="1">
    <citation type="journal article" date="1995" name="Mol. Microbiol.">
        <title>Molecular characterization of the eps gene cluster of Pseudomonas solanacearum and its transcriptional regulation at a single promoter.</title>
        <authorList>
            <person name="Huang J."/>
            <person name="Schell M."/>
        </authorList>
    </citation>
    <scope>NUCLEOTIDE SEQUENCE [GENOMIC DNA]</scope>
    <source>
        <strain>AW</strain>
    </source>
</reference>
<comment type="function">
    <text>Probably involved in polymerization and/or export of exopolysaccharide EPS I which functions as a virulence factor. May play a role in export of EPS I or its intermediates across the membranes.</text>
</comment>
<comment type="subcellular location">
    <subcellularLocation>
        <location evidence="2">Cell inner membrane</location>
        <topology evidence="2">Multi-pass membrane protein</topology>
    </subcellularLocation>
</comment>
<comment type="similarity">
    <text evidence="2">To S.marcescens SfuB.</text>
</comment>
<sequence length="418" mass="46012">MKYSAPIRLNALSAIVSHHGVLVVIGMLLAVPMAFPLFPIAATYCAAILAILLPLGRLQHVLATASSIAFAWLLTLRNPSRGLVEAGLGDDALHYMNAFYEFQQNYCCSPLDVLKTGIRSAGGGEPIFWYLSYGVAKLFDTPLMVWAILIFISLMLVWIAIYRSTERFAYVVFVAYLSTITLYALQGSAIRQAVAVGLVMVALDLLIRRRLVWAACVGLLAAGTHSSAAALLLVCATVMLFLSKDYGMLARKASWLGQLGRLLVLLVLAVAAVAFGSAEFVMSKIQARLSENQTGSAWEFQLAVEAVLACLFAWLFRMKLPREEKLTYFLFVLLCASTSFFAPAVGARLFRYTYCFYIVYLCVFFFAREGESLGQKKTLASLLFLASLGWAFYIVDVRYQGLFVSGGVIDHFLAGPFF</sequence>
<keyword id="KW-0997">Cell inner membrane</keyword>
<keyword id="KW-1003">Cell membrane</keyword>
<keyword id="KW-0472">Membrane</keyword>
<keyword id="KW-0625">Polysaccharide transport</keyword>
<keyword id="KW-0762">Sugar transport</keyword>
<keyword id="KW-0812">Transmembrane</keyword>
<keyword id="KW-1133">Transmembrane helix</keyword>
<keyword id="KW-0813">Transport</keyword>
<keyword id="KW-0843">Virulence</keyword>
<name>EPSF_RALSL</name>
<dbReference type="EMBL" id="U17898">
    <property type="protein sequence ID" value="AAA91629.1"/>
    <property type="molecule type" value="Genomic_DNA"/>
</dbReference>
<dbReference type="PIR" id="S77640">
    <property type="entry name" value="S77640"/>
</dbReference>
<dbReference type="SMR" id="Q45412"/>
<dbReference type="GO" id="GO:0005886">
    <property type="term" value="C:plasma membrane"/>
    <property type="evidence" value="ECO:0007669"/>
    <property type="project" value="UniProtKB-SubCell"/>
</dbReference>
<dbReference type="GO" id="GO:0015774">
    <property type="term" value="P:polysaccharide transport"/>
    <property type="evidence" value="ECO:0007669"/>
    <property type="project" value="UniProtKB-KW"/>
</dbReference>
<dbReference type="InterPro" id="IPR049458">
    <property type="entry name" value="EpsG-like"/>
</dbReference>
<dbReference type="Pfam" id="PF14897">
    <property type="entry name" value="EpsG"/>
    <property type="match status" value="1"/>
</dbReference>
<accession>Q45412</accession>